<keyword id="KW-0119">Carbohydrate metabolism</keyword>
<keyword id="KW-0963">Cytoplasm</keyword>
<keyword id="KW-0413">Isomerase</keyword>
<reference key="1">
    <citation type="journal article" date="2008" name="J. Bacteriol.">
        <title>The complete genome sequence of Escherichia coli DH10B: insights into the biology of a laboratory workhorse.</title>
        <authorList>
            <person name="Durfee T."/>
            <person name="Nelson R."/>
            <person name="Baldwin S."/>
            <person name="Plunkett G. III"/>
            <person name="Burland V."/>
            <person name="Mau B."/>
            <person name="Petrosino J.F."/>
            <person name="Qin X."/>
            <person name="Muzny D.M."/>
            <person name="Ayele M."/>
            <person name="Gibbs R.A."/>
            <person name="Csorgo B."/>
            <person name="Posfai G."/>
            <person name="Weinstock G.M."/>
            <person name="Blattner F.R."/>
        </authorList>
    </citation>
    <scope>NUCLEOTIDE SEQUENCE [LARGE SCALE GENOMIC DNA]</scope>
    <source>
        <strain>K12 / DH10B</strain>
    </source>
</reference>
<accession>B1X9X5</accession>
<evidence type="ECO:0000255" key="1">
    <source>
        <dbReference type="HAMAP-Rule" id="MF_01661"/>
    </source>
</evidence>
<gene>
    <name evidence="1" type="primary">rbsD</name>
    <name type="ordered locus">ECDH10B_3936</name>
</gene>
<proteinExistence type="inferred from homology"/>
<protein>
    <recommendedName>
        <fullName evidence="1">D-ribose pyranase</fullName>
        <ecNumber evidence="1">5.4.99.62</ecNumber>
    </recommendedName>
</protein>
<comment type="function">
    <text evidence="1">Catalyzes the interconversion of beta-pyran and beta-furan forms of D-ribose.</text>
</comment>
<comment type="catalytic activity">
    <reaction evidence="1">
        <text>beta-D-ribopyranose = beta-D-ribofuranose</text>
        <dbReference type="Rhea" id="RHEA:25432"/>
        <dbReference type="ChEBI" id="CHEBI:27476"/>
        <dbReference type="ChEBI" id="CHEBI:47002"/>
        <dbReference type="EC" id="5.4.99.62"/>
    </reaction>
</comment>
<comment type="pathway">
    <text evidence="1">Carbohydrate metabolism; D-ribose degradation; D-ribose 5-phosphate from beta-D-ribopyranose: step 1/2.</text>
</comment>
<comment type="subunit">
    <text evidence="1">Homodecamer.</text>
</comment>
<comment type="subcellular location">
    <subcellularLocation>
        <location evidence="1">Cytoplasm</location>
    </subcellularLocation>
</comment>
<comment type="similarity">
    <text evidence="1">Belongs to the RbsD / FucU family. RbsD subfamily.</text>
</comment>
<dbReference type="EC" id="5.4.99.62" evidence="1"/>
<dbReference type="EMBL" id="CP000948">
    <property type="protein sequence ID" value="ACB04790.1"/>
    <property type="molecule type" value="Genomic_DNA"/>
</dbReference>
<dbReference type="RefSeq" id="WP_001301979.1">
    <property type="nucleotide sequence ID" value="NC_010473.1"/>
</dbReference>
<dbReference type="SMR" id="B1X9X5"/>
<dbReference type="GeneID" id="75173982"/>
<dbReference type="KEGG" id="ecd:ECDH10B_3936"/>
<dbReference type="HOGENOM" id="CLU_135498_0_0_6"/>
<dbReference type="UniPathway" id="UPA00916">
    <property type="reaction ID" value="UER00888"/>
</dbReference>
<dbReference type="GO" id="GO:0005829">
    <property type="term" value="C:cytosol"/>
    <property type="evidence" value="ECO:0007669"/>
    <property type="project" value="TreeGrafter"/>
</dbReference>
<dbReference type="GO" id="GO:0062193">
    <property type="term" value="F:D-ribose pyranase activity"/>
    <property type="evidence" value="ECO:0007669"/>
    <property type="project" value="UniProtKB-EC"/>
</dbReference>
<dbReference type="GO" id="GO:0016872">
    <property type="term" value="F:intramolecular lyase activity"/>
    <property type="evidence" value="ECO:0007669"/>
    <property type="project" value="UniProtKB-UniRule"/>
</dbReference>
<dbReference type="GO" id="GO:0048029">
    <property type="term" value="F:monosaccharide binding"/>
    <property type="evidence" value="ECO:0007669"/>
    <property type="project" value="InterPro"/>
</dbReference>
<dbReference type="GO" id="GO:0019303">
    <property type="term" value="P:D-ribose catabolic process"/>
    <property type="evidence" value="ECO:0007669"/>
    <property type="project" value="UniProtKB-UniRule"/>
</dbReference>
<dbReference type="FunFam" id="3.40.1650.10:FF:000002">
    <property type="entry name" value="D-ribose pyranase"/>
    <property type="match status" value="1"/>
</dbReference>
<dbReference type="Gene3D" id="3.40.1650.10">
    <property type="entry name" value="RbsD-like domain"/>
    <property type="match status" value="1"/>
</dbReference>
<dbReference type="HAMAP" id="MF_01661">
    <property type="entry name" value="D_rib_pyranase"/>
    <property type="match status" value="1"/>
</dbReference>
<dbReference type="InterPro" id="IPR023064">
    <property type="entry name" value="D-ribose_pyranase"/>
</dbReference>
<dbReference type="InterPro" id="IPR023750">
    <property type="entry name" value="RbsD-like_sf"/>
</dbReference>
<dbReference type="InterPro" id="IPR007721">
    <property type="entry name" value="RbsD_FucU"/>
</dbReference>
<dbReference type="NCBIfam" id="NF008761">
    <property type="entry name" value="PRK11797.1"/>
    <property type="match status" value="1"/>
</dbReference>
<dbReference type="PANTHER" id="PTHR37831">
    <property type="entry name" value="D-RIBOSE PYRANASE"/>
    <property type="match status" value="1"/>
</dbReference>
<dbReference type="PANTHER" id="PTHR37831:SF1">
    <property type="entry name" value="D-RIBOSE PYRANASE"/>
    <property type="match status" value="1"/>
</dbReference>
<dbReference type="Pfam" id="PF05025">
    <property type="entry name" value="RbsD_FucU"/>
    <property type="match status" value="1"/>
</dbReference>
<dbReference type="SUPFAM" id="SSF102546">
    <property type="entry name" value="RbsD-like"/>
    <property type="match status" value="1"/>
</dbReference>
<feature type="chain" id="PRO_0000346197" description="D-ribose pyranase">
    <location>
        <begin position="1"/>
        <end position="139"/>
    </location>
</feature>
<feature type="active site" description="Proton donor" evidence="1">
    <location>
        <position position="20"/>
    </location>
</feature>
<feature type="binding site" evidence="1">
    <location>
        <position position="28"/>
    </location>
    <ligand>
        <name>substrate</name>
    </ligand>
</feature>
<feature type="binding site" evidence="1">
    <location>
        <position position="106"/>
    </location>
    <ligand>
        <name>substrate</name>
    </ligand>
</feature>
<feature type="binding site" evidence="1">
    <location>
        <begin position="128"/>
        <end position="130"/>
    </location>
    <ligand>
        <name>substrate</name>
    </ligand>
</feature>
<organism>
    <name type="scientific">Escherichia coli (strain K12 / DH10B)</name>
    <dbReference type="NCBI Taxonomy" id="316385"/>
    <lineage>
        <taxon>Bacteria</taxon>
        <taxon>Pseudomonadati</taxon>
        <taxon>Pseudomonadota</taxon>
        <taxon>Gammaproteobacteria</taxon>
        <taxon>Enterobacterales</taxon>
        <taxon>Enterobacteriaceae</taxon>
        <taxon>Escherichia</taxon>
    </lineage>
</organism>
<sequence>MKKGTVLNSDISSVISRLGHTDTLVVCDAGLPIPKSTTRIDMALTQGVPSFMQVLGVVTNEMQVEAAIIAEEIKHHNPQLHETLLTHLEQLQKHQGNTIEIRYTTHEQFKQQTAESQAVIRSGECSPYANIILCAGVTF</sequence>
<name>RBSD_ECODH</name>